<sequence length="443" mass="50176">MESLASLYKNHIATLQERTRDALARFKLDALLIHSGELFNVFLDDHPYPFKVNPQFKAWVPVTQVPNCWLLVDGVNKPKLWFYLPVDYWHNVEPLPTSFWTEDVEVIALPKADGIGSLLPAARGNIGYIGPVPERALQLGIEASNINPKGVIDYLHYYRSFKTEYELACMREAQKMAVNGHRAAEEAFRSGMSEFDINIAYLTATGHRDTDVPYSNIVALNEHAAVLHYTKLDHQAPEEMRSFLLDAGAEYNGYAADLTRTWSAKSDNDYAQLVKDVNDEQLALIATMKAGVSYVDYHIQFHQRIAKLLRKHQIITDMSEEAMVENDLTGPFMPHGIGHPLGLQVHDVAGFMQDDSGTHLAAPAKYPYLRCTRILQPGMVLTIEPGIYFIESLLAPWREGQFSKHFNWQKIEALKPFGGIRIEDNVVIHENNVENMTRDLKLA</sequence>
<gene>
    <name evidence="1" type="primary">pepQ</name>
    <name type="ordered locus">ECUMN_4371</name>
</gene>
<reference key="1">
    <citation type="journal article" date="2009" name="PLoS Genet.">
        <title>Organised genome dynamics in the Escherichia coli species results in highly diverse adaptive paths.</title>
        <authorList>
            <person name="Touchon M."/>
            <person name="Hoede C."/>
            <person name="Tenaillon O."/>
            <person name="Barbe V."/>
            <person name="Baeriswyl S."/>
            <person name="Bidet P."/>
            <person name="Bingen E."/>
            <person name="Bonacorsi S."/>
            <person name="Bouchier C."/>
            <person name="Bouvet O."/>
            <person name="Calteau A."/>
            <person name="Chiapello H."/>
            <person name="Clermont O."/>
            <person name="Cruveiller S."/>
            <person name="Danchin A."/>
            <person name="Diard M."/>
            <person name="Dossat C."/>
            <person name="Karoui M.E."/>
            <person name="Frapy E."/>
            <person name="Garry L."/>
            <person name="Ghigo J.M."/>
            <person name="Gilles A.M."/>
            <person name="Johnson J."/>
            <person name="Le Bouguenec C."/>
            <person name="Lescat M."/>
            <person name="Mangenot S."/>
            <person name="Martinez-Jehanne V."/>
            <person name="Matic I."/>
            <person name="Nassif X."/>
            <person name="Oztas S."/>
            <person name="Petit M.A."/>
            <person name="Pichon C."/>
            <person name="Rouy Z."/>
            <person name="Ruf C.S."/>
            <person name="Schneider D."/>
            <person name="Tourret J."/>
            <person name="Vacherie B."/>
            <person name="Vallenet D."/>
            <person name="Medigue C."/>
            <person name="Rocha E.P.C."/>
            <person name="Denamur E."/>
        </authorList>
    </citation>
    <scope>NUCLEOTIDE SEQUENCE [LARGE SCALE GENOMIC DNA]</scope>
    <source>
        <strain>UMN026 / ExPEC</strain>
    </source>
</reference>
<comment type="function">
    <text evidence="1">Splits dipeptides with a prolyl residue in the C-terminal position.</text>
</comment>
<comment type="catalytic activity">
    <reaction evidence="1">
        <text>Xaa-L-Pro dipeptide + H2O = an L-alpha-amino acid + L-proline</text>
        <dbReference type="Rhea" id="RHEA:76407"/>
        <dbReference type="ChEBI" id="CHEBI:15377"/>
        <dbReference type="ChEBI" id="CHEBI:59869"/>
        <dbReference type="ChEBI" id="CHEBI:60039"/>
        <dbReference type="ChEBI" id="CHEBI:195196"/>
        <dbReference type="EC" id="3.4.13.9"/>
    </reaction>
</comment>
<comment type="cofactor">
    <cofactor evidence="1">
        <name>Mn(2+)</name>
        <dbReference type="ChEBI" id="CHEBI:29035"/>
    </cofactor>
    <text evidence="1">Binds 2 manganese ions per subunit.</text>
</comment>
<comment type="similarity">
    <text evidence="1">Belongs to the peptidase M24B family. Bacterial-type prolidase subfamily.</text>
</comment>
<proteinExistence type="inferred from homology"/>
<keyword id="KW-0224">Dipeptidase</keyword>
<keyword id="KW-0378">Hydrolase</keyword>
<keyword id="KW-0464">Manganese</keyword>
<keyword id="KW-0479">Metal-binding</keyword>
<keyword id="KW-0482">Metalloprotease</keyword>
<keyword id="KW-0645">Protease</keyword>
<accession>B7NFE8</accession>
<organism>
    <name type="scientific">Escherichia coli O17:K52:H18 (strain UMN026 / ExPEC)</name>
    <dbReference type="NCBI Taxonomy" id="585056"/>
    <lineage>
        <taxon>Bacteria</taxon>
        <taxon>Pseudomonadati</taxon>
        <taxon>Pseudomonadota</taxon>
        <taxon>Gammaproteobacteria</taxon>
        <taxon>Enterobacterales</taxon>
        <taxon>Enterobacteriaceae</taxon>
        <taxon>Escherichia</taxon>
    </lineage>
</organism>
<name>PEPQ_ECOLU</name>
<evidence type="ECO:0000255" key="1">
    <source>
        <dbReference type="HAMAP-Rule" id="MF_01279"/>
    </source>
</evidence>
<feature type="chain" id="PRO_1000140316" description="Xaa-Pro dipeptidase">
    <location>
        <begin position="1"/>
        <end position="443"/>
    </location>
</feature>
<feature type="binding site" evidence="1">
    <location>
        <position position="246"/>
    </location>
    <ligand>
        <name>Mn(2+)</name>
        <dbReference type="ChEBI" id="CHEBI:29035"/>
        <label>2</label>
    </ligand>
</feature>
<feature type="binding site" evidence="1">
    <location>
        <position position="257"/>
    </location>
    <ligand>
        <name>Mn(2+)</name>
        <dbReference type="ChEBI" id="CHEBI:29035"/>
        <label>1</label>
    </ligand>
</feature>
<feature type="binding site" evidence="1">
    <location>
        <position position="257"/>
    </location>
    <ligand>
        <name>Mn(2+)</name>
        <dbReference type="ChEBI" id="CHEBI:29035"/>
        <label>2</label>
    </ligand>
</feature>
<feature type="binding site" evidence="1">
    <location>
        <position position="339"/>
    </location>
    <ligand>
        <name>Mn(2+)</name>
        <dbReference type="ChEBI" id="CHEBI:29035"/>
        <label>1</label>
    </ligand>
</feature>
<feature type="binding site" evidence="1">
    <location>
        <position position="384"/>
    </location>
    <ligand>
        <name>Mn(2+)</name>
        <dbReference type="ChEBI" id="CHEBI:29035"/>
        <label>1</label>
    </ligand>
</feature>
<feature type="binding site" evidence="1">
    <location>
        <position position="423"/>
    </location>
    <ligand>
        <name>Mn(2+)</name>
        <dbReference type="ChEBI" id="CHEBI:29035"/>
        <label>1</label>
    </ligand>
</feature>
<feature type="binding site" evidence="1">
    <location>
        <position position="423"/>
    </location>
    <ligand>
        <name>Mn(2+)</name>
        <dbReference type="ChEBI" id="CHEBI:29035"/>
        <label>2</label>
    </ligand>
</feature>
<dbReference type="EC" id="3.4.13.9" evidence="1"/>
<dbReference type="EMBL" id="CU928163">
    <property type="protein sequence ID" value="CAR15504.1"/>
    <property type="molecule type" value="Genomic_DNA"/>
</dbReference>
<dbReference type="RefSeq" id="WP_000444561.1">
    <property type="nucleotide sequence ID" value="NC_011751.1"/>
</dbReference>
<dbReference type="RefSeq" id="YP_002414997.1">
    <property type="nucleotide sequence ID" value="NC_011751.1"/>
</dbReference>
<dbReference type="SMR" id="B7NFE8"/>
<dbReference type="STRING" id="585056.ECUMN_4371"/>
<dbReference type="MEROPS" id="M24.003"/>
<dbReference type="GeneID" id="86861950"/>
<dbReference type="KEGG" id="eum:ECUMN_4371"/>
<dbReference type="PATRIC" id="fig|585056.7.peg.4539"/>
<dbReference type="HOGENOM" id="CLU_050675_0_0_6"/>
<dbReference type="Proteomes" id="UP000007097">
    <property type="component" value="Chromosome"/>
</dbReference>
<dbReference type="GO" id="GO:0005829">
    <property type="term" value="C:cytosol"/>
    <property type="evidence" value="ECO:0007669"/>
    <property type="project" value="TreeGrafter"/>
</dbReference>
<dbReference type="GO" id="GO:0004177">
    <property type="term" value="F:aminopeptidase activity"/>
    <property type="evidence" value="ECO:0007669"/>
    <property type="project" value="TreeGrafter"/>
</dbReference>
<dbReference type="GO" id="GO:0046872">
    <property type="term" value="F:metal ion binding"/>
    <property type="evidence" value="ECO:0007669"/>
    <property type="project" value="UniProtKB-KW"/>
</dbReference>
<dbReference type="GO" id="GO:0008235">
    <property type="term" value="F:metalloexopeptidase activity"/>
    <property type="evidence" value="ECO:0007669"/>
    <property type="project" value="UniProtKB-UniRule"/>
</dbReference>
<dbReference type="GO" id="GO:0016795">
    <property type="term" value="F:phosphoric triester hydrolase activity"/>
    <property type="evidence" value="ECO:0007669"/>
    <property type="project" value="InterPro"/>
</dbReference>
<dbReference type="GO" id="GO:0102009">
    <property type="term" value="F:proline dipeptidase activity"/>
    <property type="evidence" value="ECO:0007669"/>
    <property type="project" value="UniProtKB-EC"/>
</dbReference>
<dbReference type="GO" id="GO:0006508">
    <property type="term" value="P:proteolysis"/>
    <property type="evidence" value="ECO:0007669"/>
    <property type="project" value="UniProtKB-KW"/>
</dbReference>
<dbReference type="CDD" id="cd01087">
    <property type="entry name" value="Prolidase"/>
    <property type="match status" value="1"/>
</dbReference>
<dbReference type="FunFam" id="3.40.350.10:FF:000002">
    <property type="entry name" value="Xaa-Pro dipeptidase"/>
    <property type="match status" value="1"/>
</dbReference>
<dbReference type="FunFam" id="3.90.230.10:FF:000006">
    <property type="entry name" value="Xaa-Pro dipeptidase"/>
    <property type="match status" value="1"/>
</dbReference>
<dbReference type="Gene3D" id="3.90.230.10">
    <property type="entry name" value="Creatinase/methionine aminopeptidase superfamily"/>
    <property type="match status" value="1"/>
</dbReference>
<dbReference type="Gene3D" id="3.40.350.10">
    <property type="entry name" value="Creatinase/prolidase N-terminal domain"/>
    <property type="match status" value="1"/>
</dbReference>
<dbReference type="HAMAP" id="MF_01279">
    <property type="entry name" value="X_Pro_dipeptid"/>
    <property type="match status" value="1"/>
</dbReference>
<dbReference type="InterPro" id="IPR029149">
    <property type="entry name" value="Creatin/AminoP/Spt16_N"/>
</dbReference>
<dbReference type="InterPro" id="IPR036005">
    <property type="entry name" value="Creatinase/aminopeptidase-like"/>
</dbReference>
<dbReference type="InterPro" id="IPR048819">
    <property type="entry name" value="PepQ_N"/>
</dbReference>
<dbReference type="InterPro" id="IPR000994">
    <property type="entry name" value="Pept_M24"/>
</dbReference>
<dbReference type="InterPro" id="IPR001131">
    <property type="entry name" value="Peptidase_M24B_aminopep-P_CS"/>
</dbReference>
<dbReference type="InterPro" id="IPR052433">
    <property type="entry name" value="X-Pro_dipept-like"/>
</dbReference>
<dbReference type="InterPro" id="IPR022846">
    <property type="entry name" value="X_Pro_dipept"/>
</dbReference>
<dbReference type="NCBIfam" id="NF010133">
    <property type="entry name" value="PRK13607.1"/>
    <property type="match status" value="1"/>
</dbReference>
<dbReference type="PANTHER" id="PTHR43226">
    <property type="entry name" value="XAA-PRO AMINOPEPTIDASE 3"/>
    <property type="match status" value="1"/>
</dbReference>
<dbReference type="PANTHER" id="PTHR43226:SF8">
    <property type="entry name" value="XAA-PRO DIPEPTIDASE"/>
    <property type="match status" value="1"/>
</dbReference>
<dbReference type="Pfam" id="PF21216">
    <property type="entry name" value="PepQ_N"/>
    <property type="match status" value="1"/>
</dbReference>
<dbReference type="Pfam" id="PF00557">
    <property type="entry name" value="Peptidase_M24"/>
    <property type="match status" value="1"/>
</dbReference>
<dbReference type="SUPFAM" id="SSF55920">
    <property type="entry name" value="Creatinase/aminopeptidase"/>
    <property type="match status" value="1"/>
</dbReference>
<dbReference type="PROSITE" id="PS00491">
    <property type="entry name" value="PROLINE_PEPTIDASE"/>
    <property type="match status" value="1"/>
</dbReference>
<protein>
    <recommendedName>
        <fullName evidence="1">Xaa-Pro dipeptidase</fullName>
        <shortName evidence="1">X-Pro dipeptidase</shortName>
        <ecNumber evidence="1">3.4.13.9</ecNumber>
    </recommendedName>
    <alternativeName>
        <fullName evidence="1">Imidodipeptidase</fullName>
    </alternativeName>
    <alternativeName>
        <fullName evidence="1">Proline dipeptidase</fullName>
        <shortName evidence="1">Prolidase</shortName>
    </alternativeName>
</protein>